<dbReference type="EC" id="6.3.4.-" evidence="1"/>
<dbReference type="EMBL" id="BX571856">
    <property type="protein sequence ID" value="CAG40101.1"/>
    <property type="molecule type" value="Genomic_DNA"/>
</dbReference>
<dbReference type="RefSeq" id="WP_000843621.1">
    <property type="nucleotide sequence ID" value="NC_002952.2"/>
</dbReference>
<dbReference type="SMR" id="Q6GHW0"/>
<dbReference type="KEGG" id="sar:SAR1099"/>
<dbReference type="HOGENOM" id="CLU_038915_0_2_9"/>
<dbReference type="Proteomes" id="UP000000596">
    <property type="component" value="Chromosome"/>
</dbReference>
<dbReference type="GO" id="GO:0005737">
    <property type="term" value="C:cytoplasm"/>
    <property type="evidence" value="ECO:0007669"/>
    <property type="project" value="UniProtKB-SubCell"/>
</dbReference>
<dbReference type="GO" id="GO:0005524">
    <property type="term" value="F:ATP binding"/>
    <property type="evidence" value="ECO:0007669"/>
    <property type="project" value="UniProtKB-KW"/>
</dbReference>
<dbReference type="GO" id="GO:0016879">
    <property type="term" value="F:ligase activity, forming carbon-nitrogen bonds"/>
    <property type="evidence" value="ECO:0007669"/>
    <property type="project" value="UniProtKB-UniRule"/>
</dbReference>
<dbReference type="GO" id="GO:0000049">
    <property type="term" value="F:tRNA binding"/>
    <property type="evidence" value="ECO:0007669"/>
    <property type="project" value="UniProtKB-KW"/>
</dbReference>
<dbReference type="GO" id="GO:0006400">
    <property type="term" value="P:tRNA modification"/>
    <property type="evidence" value="ECO:0007669"/>
    <property type="project" value="UniProtKB-UniRule"/>
</dbReference>
<dbReference type="Gene3D" id="3.40.50.620">
    <property type="entry name" value="HUPs"/>
    <property type="match status" value="1"/>
</dbReference>
<dbReference type="HAMAP" id="MF_01539">
    <property type="entry name" value="TmcAL"/>
    <property type="match status" value="1"/>
</dbReference>
<dbReference type="InterPro" id="IPR014729">
    <property type="entry name" value="Rossmann-like_a/b/a_fold"/>
</dbReference>
<dbReference type="InterPro" id="IPR008513">
    <property type="entry name" value="tRNA(Met)_cyd_acetate_ligase"/>
</dbReference>
<dbReference type="NCBIfam" id="NF010191">
    <property type="entry name" value="PRK13670.1"/>
    <property type="match status" value="1"/>
</dbReference>
<dbReference type="PANTHER" id="PTHR37825">
    <property type="entry name" value="TRNA(MET) CYTIDINE ACETATE LIGASE"/>
    <property type="match status" value="1"/>
</dbReference>
<dbReference type="PANTHER" id="PTHR37825:SF1">
    <property type="entry name" value="TRNA(MET) CYTIDINE ACETATE LIGASE"/>
    <property type="match status" value="1"/>
</dbReference>
<dbReference type="Pfam" id="PF05636">
    <property type="entry name" value="HIGH_NTase1"/>
    <property type="match status" value="1"/>
</dbReference>
<dbReference type="SUPFAM" id="SSF52374">
    <property type="entry name" value="Nucleotidylyl transferase"/>
    <property type="match status" value="1"/>
</dbReference>
<gene>
    <name evidence="1" type="primary">tmcAL</name>
    <name type="ordered locus">SAR1099</name>
</gene>
<protein>
    <recommendedName>
        <fullName evidence="1">tRNA(Met) cytidine acetate ligase</fullName>
        <ecNumber evidence="1">6.3.4.-</ecNumber>
    </recommendedName>
</protein>
<evidence type="ECO:0000255" key="1">
    <source>
        <dbReference type="HAMAP-Rule" id="MF_01539"/>
    </source>
</evidence>
<reference key="1">
    <citation type="journal article" date="2004" name="Proc. Natl. Acad. Sci. U.S.A.">
        <title>Complete genomes of two clinical Staphylococcus aureus strains: evidence for the rapid evolution of virulence and drug resistance.</title>
        <authorList>
            <person name="Holden M.T.G."/>
            <person name="Feil E.J."/>
            <person name="Lindsay J.A."/>
            <person name="Peacock S.J."/>
            <person name="Day N.P.J."/>
            <person name="Enright M.C."/>
            <person name="Foster T.J."/>
            <person name="Moore C.E."/>
            <person name="Hurst L."/>
            <person name="Atkin R."/>
            <person name="Barron A."/>
            <person name="Bason N."/>
            <person name="Bentley S.D."/>
            <person name="Chillingworth C."/>
            <person name="Chillingworth T."/>
            <person name="Churcher C."/>
            <person name="Clark L."/>
            <person name="Corton C."/>
            <person name="Cronin A."/>
            <person name="Doggett J."/>
            <person name="Dowd L."/>
            <person name="Feltwell T."/>
            <person name="Hance Z."/>
            <person name="Harris B."/>
            <person name="Hauser H."/>
            <person name="Holroyd S."/>
            <person name="Jagels K."/>
            <person name="James K.D."/>
            <person name="Lennard N."/>
            <person name="Line A."/>
            <person name="Mayes R."/>
            <person name="Moule S."/>
            <person name="Mungall K."/>
            <person name="Ormond D."/>
            <person name="Quail M.A."/>
            <person name="Rabbinowitsch E."/>
            <person name="Rutherford K.M."/>
            <person name="Sanders M."/>
            <person name="Sharp S."/>
            <person name="Simmonds M."/>
            <person name="Stevens K."/>
            <person name="Whitehead S."/>
            <person name="Barrell B.G."/>
            <person name="Spratt B.G."/>
            <person name="Parkhill J."/>
        </authorList>
    </citation>
    <scope>NUCLEOTIDE SEQUENCE [LARGE SCALE GENOMIC DNA]</scope>
    <source>
        <strain>MRSA252</strain>
    </source>
</reference>
<feature type="chain" id="PRO_0000147181" description="tRNA(Met) cytidine acetate ligase">
    <location>
        <begin position="1"/>
        <end position="379"/>
    </location>
</feature>
<feature type="binding site" evidence="1">
    <location>
        <begin position="7"/>
        <end position="20"/>
    </location>
    <ligand>
        <name>ATP</name>
        <dbReference type="ChEBI" id="CHEBI:30616"/>
    </ligand>
</feature>
<feature type="binding site" evidence="1">
    <location>
        <position position="100"/>
    </location>
    <ligand>
        <name>ATP</name>
        <dbReference type="ChEBI" id="CHEBI:30616"/>
    </ligand>
</feature>
<feature type="binding site" evidence="1">
    <location>
        <position position="153"/>
    </location>
    <ligand>
        <name>ATP</name>
        <dbReference type="ChEBI" id="CHEBI:30616"/>
    </ligand>
</feature>
<feature type="binding site" evidence="1">
    <location>
        <position position="178"/>
    </location>
    <ligand>
        <name>ATP</name>
        <dbReference type="ChEBI" id="CHEBI:30616"/>
    </ligand>
</feature>
<keyword id="KW-0067">ATP-binding</keyword>
<keyword id="KW-0963">Cytoplasm</keyword>
<keyword id="KW-0436">Ligase</keyword>
<keyword id="KW-0547">Nucleotide-binding</keyword>
<keyword id="KW-0694">RNA-binding</keyword>
<keyword id="KW-0819">tRNA processing</keyword>
<keyword id="KW-0820">tRNA-binding</keyword>
<sequence>MKSVGLITEYNPFHNGHQYHINQSKKLTNADVTIAIMSGNFVMRGEPAIYNKFTRAKMALSTADLVIELPATASLSSGDHFAELAVKVADYMSVDTIAFGSENNNIKTLKQLAHSINEIEQSESFSQKVKEGKSYPRIISELLEHHEALASPNNILGISYLKAIAKHAKNINAISIKRENAQHHDSLIQHHKFASGTSIRTSIISQDDHWHHVVPKDIQHLYVTPHITLNQIFPYLKYQIIAMTTESLKNIYTVTEGFENRLKSYINEATDFHHFVKSLKTKRYTYTHIQRLLMNVLLNIKPTDVTRNIHAVKVLAMNDRGRQYLKHLKTVFPERQYITNINKSNAHYFTNEIKATHIYNAISGQQQTDFNTPVIQQYR</sequence>
<name>TMCAL_STAAR</name>
<organism>
    <name type="scientific">Staphylococcus aureus (strain MRSA252)</name>
    <dbReference type="NCBI Taxonomy" id="282458"/>
    <lineage>
        <taxon>Bacteria</taxon>
        <taxon>Bacillati</taxon>
        <taxon>Bacillota</taxon>
        <taxon>Bacilli</taxon>
        <taxon>Bacillales</taxon>
        <taxon>Staphylococcaceae</taxon>
        <taxon>Staphylococcus</taxon>
    </lineage>
</organism>
<comment type="function">
    <text evidence="1">Catalyzes the formation of N(4)-acetylcytidine (ac(4)C) at the wobble position of elongator tRNA(Met), using acetate and ATP as substrates. First activates an acetate ion to form acetyladenylate (Ac-AMP) and then transfers the acetyl group to tRNA to form ac(4)C34.</text>
</comment>
<comment type="catalytic activity">
    <reaction evidence="1">
        <text>cytidine(34) in elongator tRNA(Met) + acetate + ATP = N(4)-acetylcytidine(34) in elongator tRNA(Met) + AMP + diphosphate</text>
        <dbReference type="Rhea" id="RHEA:58144"/>
        <dbReference type="Rhea" id="RHEA-COMP:10693"/>
        <dbReference type="Rhea" id="RHEA-COMP:10694"/>
        <dbReference type="ChEBI" id="CHEBI:30089"/>
        <dbReference type="ChEBI" id="CHEBI:30616"/>
        <dbReference type="ChEBI" id="CHEBI:33019"/>
        <dbReference type="ChEBI" id="CHEBI:74900"/>
        <dbReference type="ChEBI" id="CHEBI:82748"/>
        <dbReference type="ChEBI" id="CHEBI:456215"/>
    </reaction>
</comment>
<comment type="subcellular location">
    <subcellularLocation>
        <location evidence="1">Cytoplasm</location>
    </subcellularLocation>
</comment>
<comment type="similarity">
    <text evidence="1">Belongs to the TmcAL family.</text>
</comment>
<accession>Q6GHW0</accession>
<proteinExistence type="inferred from homology"/>